<protein>
    <recommendedName>
        <fullName evidence="1">Leucyl/phenylalanyl-tRNA--protein transferase</fullName>
        <ecNumber evidence="1">2.3.2.6</ecNumber>
    </recommendedName>
    <alternativeName>
        <fullName evidence="1">L/F-transferase</fullName>
    </alternativeName>
    <alternativeName>
        <fullName evidence="1">Leucyltransferase</fullName>
    </alternativeName>
    <alternativeName>
        <fullName evidence="1">Phenyalanyltransferase</fullName>
    </alternativeName>
</protein>
<gene>
    <name evidence="1" type="primary">aat</name>
    <name type="ordered locus">YE1520</name>
</gene>
<accession>A1JMD2</accession>
<name>LFTR_YERE8</name>
<proteinExistence type="inferred from homology"/>
<reference key="1">
    <citation type="journal article" date="2006" name="PLoS Genet.">
        <title>The complete genome sequence and comparative genome analysis of the high pathogenicity Yersinia enterocolitica strain 8081.</title>
        <authorList>
            <person name="Thomson N.R."/>
            <person name="Howard S."/>
            <person name="Wren B.W."/>
            <person name="Holden M.T.G."/>
            <person name="Crossman L."/>
            <person name="Challis G.L."/>
            <person name="Churcher C."/>
            <person name="Mungall K."/>
            <person name="Brooks K."/>
            <person name="Chillingworth T."/>
            <person name="Feltwell T."/>
            <person name="Abdellah Z."/>
            <person name="Hauser H."/>
            <person name="Jagels K."/>
            <person name="Maddison M."/>
            <person name="Moule S."/>
            <person name="Sanders M."/>
            <person name="Whitehead S."/>
            <person name="Quail M.A."/>
            <person name="Dougan G."/>
            <person name="Parkhill J."/>
            <person name="Prentice M.B."/>
        </authorList>
    </citation>
    <scope>NUCLEOTIDE SEQUENCE [LARGE SCALE GENOMIC DNA]</scope>
    <source>
        <strain>NCTC 13174 / 8081</strain>
    </source>
</reference>
<organism>
    <name type="scientific">Yersinia enterocolitica serotype O:8 / biotype 1B (strain NCTC 13174 / 8081)</name>
    <dbReference type="NCBI Taxonomy" id="393305"/>
    <lineage>
        <taxon>Bacteria</taxon>
        <taxon>Pseudomonadati</taxon>
        <taxon>Pseudomonadota</taxon>
        <taxon>Gammaproteobacteria</taxon>
        <taxon>Enterobacterales</taxon>
        <taxon>Yersiniaceae</taxon>
        <taxon>Yersinia</taxon>
    </lineage>
</organism>
<comment type="function">
    <text evidence="1">Functions in the N-end rule pathway of protein degradation where it conjugates Leu, Phe and, less efficiently, Met from aminoacyl-tRNAs to the N-termini of proteins containing an N-terminal arginine or lysine.</text>
</comment>
<comment type="catalytic activity">
    <reaction evidence="1">
        <text>N-terminal L-lysyl-[protein] + L-leucyl-tRNA(Leu) = N-terminal L-leucyl-L-lysyl-[protein] + tRNA(Leu) + H(+)</text>
        <dbReference type="Rhea" id="RHEA:12340"/>
        <dbReference type="Rhea" id="RHEA-COMP:9613"/>
        <dbReference type="Rhea" id="RHEA-COMP:9622"/>
        <dbReference type="Rhea" id="RHEA-COMP:12670"/>
        <dbReference type="Rhea" id="RHEA-COMP:12671"/>
        <dbReference type="ChEBI" id="CHEBI:15378"/>
        <dbReference type="ChEBI" id="CHEBI:65249"/>
        <dbReference type="ChEBI" id="CHEBI:78442"/>
        <dbReference type="ChEBI" id="CHEBI:78494"/>
        <dbReference type="ChEBI" id="CHEBI:133043"/>
        <dbReference type="EC" id="2.3.2.6"/>
    </reaction>
</comment>
<comment type="catalytic activity">
    <reaction evidence="1">
        <text>N-terminal L-arginyl-[protein] + L-leucyl-tRNA(Leu) = N-terminal L-leucyl-L-arginyl-[protein] + tRNA(Leu) + H(+)</text>
        <dbReference type="Rhea" id="RHEA:50416"/>
        <dbReference type="Rhea" id="RHEA-COMP:9613"/>
        <dbReference type="Rhea" id="RHEA-COMP:9622"/>
        <dbReference type="Rhea" id="RHEA-COMP:12672"/>
        <dbReference type="Rhea" id="RHEA-COMP:12673"/>
        <dbReference type="ChEBI" id="CHEBI:15378"/>
        <dbReference type="ChEBI" id="CHEBI:64719"/>
        <dbReference type="ChEBI" id="CHEBI:78442"/>
        <dbReference type="ChEBI" id="CHEBI:78494"/>
        <dbReference type="ChEBI" id="CHEBI:133044"/>
        <dbReference type="EC" id="2.3.2.6"/>
    </reaction>
</comment>
<comment type="catalytic activity">
    <reaction evidence="1">
        <text>L-phenylalanyl-tRNA(Phe) + an N-terminal L-alpha-aminoacyl-[protein] = an N-terminal L-phenylalanyl-L-alpha-aminoacyl-[protein] + tRNA(Phe)</text>
        <dbReference type="Rhea" id="RHEA:43632"/>
        <dbReference type="Rhea" id="RHEA-COMP:9668"/>
        <dbReference type="Rhea" id="RHEA-COMP:9699"/>
        <dbReference type="Rhea" id="RHEA-COMP:10636"/>
        <dbReference type="Rhea" id="RHEA-COMP:10637"/>
        <dbReference type="ChEBI" id="CHEBI:78442"/>
        <dbReference type="ChEBI" id="CHEBI:78531"/>
        <dbReference type="ChEBI" id="CHEBI:78597"/>
        <dbReference type="ChEBI" id="CHEBI:83561"/>
        <dbReference type="EC" id="2.3.2.6"/>
    </reaction>
</comment>
<comment type="subcellular location">
    <subcellularLocation>
        <location evidence="1">Cytoplasm</location>
    </subcellularLocation>
</comment>
<comment type="similarity">
    <text evidence="1">Belongs to the L/F-transferase family.</text>
</comment>
<keyword id="KW-0012">Acyltransferase</keyword>
<keyword id="KW-0963">Cytoplasm</keyword>
<keyword id="KW-0808">Transferase</keyword>
<feature type="chain" id="PRO_0000304365" description="Leucyl/phenylalanyl-tRNA--protein transferase">
    <location>
        <begin position="1"/>
        <end position="236"/>
    </location>
</feature>
<evidence type="ECO:0000255" key="1">
    <source>
        <dbReference type="HAMAP-Rule" id="MF_00688"/>
    </source>
</evidence>
<sequence length="236" mass="26549">MRITQLSSQSFAFPSPELALREPNGLLALGGDLSPPRLLAAYERGIFPWFSPGEMILWWSPDPRAVLYPEDLHISRSMRRFLRNCPYRFTLNHAFKDVIRACATLRDEGTWIGDDVQQAYCHLHTLGHAHSVEVWLENELVGGLYGISVGSLFCGESMFSRANNASKSALMVFCHHFTRHGGELIDCQVLNAHTASLGAIEIPRNFFLQQLSQLQFSPLPAECWLPQSLNFSSAMQ</sequence>
<dbReference type="EC" id="2.3.2.6" evidence="1"/>
<dbReference type="EMBL" id="AM286415">
    <property type="protein sequence ID" value="CAL11599.1"/>
    <property type="molecule type" value="Genomic_DNA"/>
</dbReference>
<dbReference type="RefSeq" id="WP_011816030.1">
    <property type="nucleotide sequence ID" value="NC_008800.1"/>
</dbReference>
<dbReference type="RefSeq" id="YP_001005816.1">
    <property type="nucleotide sequence ID" value="NC_008800.1"/>
</dbReference>
<dbReference type="SMR" id="A1JMD2"/>
<dbReference type="KEGG" id="yen:YE1520"/>
<dbReference type="PATRIC" id="fig|393305.7.peg.1645"/>
<dbReference type="eggNOG" id="COG2360">
    <property type="taxonomic scope" value="Bacteria"/>
</dbReference>
<dbReference type="HOGENOM" id="CLU_075045_0_0_6"/>
<dbReference type="OrthoDB" id="9790282at2"/>
<dbReference type="Proteomes" id="UP000000642">
    <property type="component" value="Chromosome"/>
</dbReference>
<dbReference type="GO" id="GO:0005737">
    <property type="term" value="C:cytoplasm"/>
    <property type="evidence" value="ECO:0007669"/>
    <property type="project" value="UniProtKB-SubCell"/>
</dbReference>
<dbReference type="GO" id="GO:0008914">
    <property type="term" value="F:leucyl-tRNA--protein transferase activity"/>
    <property type="evidence" value="ECO:0007669"/>
    <property type="project" value="UniProtKB-UniRule"/>
</dbReference>
<dbReference type="GO" id="GO:0030163">
    <property type="term" value="P:protein catabolic process"/>
    <property type="evidence" value="ECO:0007669"/>
    <property type="project" value="UniProtKB-UniRule"/>
</dbReference>
<dbReference type="FunFam" id="3.30.70.3550:FF:000001">
    <property type="entry name" value="Leucyl/phenylalanyl-tRNA--protein transferase"/>
    <property type="match status" value="1"/>
</dbReference>
<dbReference type="FunFam" id="3.40.630.70:FF:000001">
    <property type="entry name" value="Leucyl/phenylalanyl-tRNA--protein transferase"/>
    <property type="match status" value="1"/>
</dbReference>
<dbReference type="Gene3D" id="3.40.630.70">
    <property type="entry name" value="Leucyl/phenylalanyl-tRNA-protein transferase, C-terminal domain"/>
    <property type="match status" value="1"/>
</dbReference>
<dbReference type="Gene3D" id="3.30.70.3550">
    <property type="entry name" value="Leucyl/phenylalanyl-tRNA-protein transferase, N-terminal domain"/>
    <property type="match status" value="1"/>
</dbReference>
<dbReference type="HAMAP" id="MF_00688">
    <property type="entry name" value="Leu_Phe_trans"/>
    <property type="match status" value="1"/>
</dbReference>
<dbReference type="InterPro" id="IPR016181">
    <property type="entry name" value="Acyl_CoA_acyltransferase"/>
</dbReference>
<dbReference type="InterPro" id="IPR004616">
    <property type="entry name" value="Leu/Phe-tRNA_Trfase"/>
</dbReference>
<dbReference type="InterPro" id="IPR042203">
    <property type="entry name" value="Leu/Phe-tRNA_Trfase_C"/>
</dbReference>
<dbReference type="InterPro" id="IPR042221">
    <property type="entry name" value="Leu/Phe-tRNA_Trfase_N"/>
</dbReference>
<dbReference type="NCBIfam" id="TIGR00667">
    <property type="entry name" value="aat"/>
    <property type="match status" value="1"/>
</dbReference>
<dbReference type="PANTHER" id="PTHR30098">
    <property type="entry name" value="LEUCYL/PHENYLALANYL-TRNA--PROTEIN TRANSFERASE"/>
    <property type="match status" value="1"/>
</dbReference>
<dbReference type="PANTHER" id="PTHR30098:SF2">
    <property type="entry name" value="LEUCYL_PHENYLALANYL-TRNA--PROTEIN TRANSFERASE"/>
    <property type="match status" value="1"/>
</dbReference>
<dbReference type="Pfam" id="PF03588">
    <property type="entry name" value="Leu_Phe_trans"/>
    <property type="match status" value="1"/>
</dbReference>
<dbReference type="SUPFAM" id="SSF55729">
    <property type="entry name" value="Acyl-CoA N-acyltransferases (Nat)"/>
    <property type="match status" value="1"/>
</dbReference>